<evidence type="ECO:0000255" key="1">
    <source>
        <dbReference type="HAMAP-Rule" id="MF_00146"/>
    </source>
</evidence>
<feature type="chain" id="PRO_1000123160" description="dCTP deaminase">
    <location>
        <begin position="1"/>
        <end position="188"/>
    </location>
</feature>
<feature type="active site" description="Proton donor/acceptor" evidence="1">
    <location>
        <position position="137"/>
    </location>
</feature>
<feature type="binding site" evidence="1">
    <location>
        <begin position="111"/>
        <end position="116"/>
    </location>
    <ligand>
        <name>dCTP</name>
        <dbReference type="ChEBI" id="CHEBI:61481"/>
    </ligand>
</feature>
<feature type="binding site" evidence="1">
    <location>
        <begin position="135"/>
        <end position="137"/>
    </location>
    <ligand>
        <name>dCTP</name>
        <dbReference type="ChEBI" id="CHEBI:61481"/>
    </ligand>
</feature>
<feature type="binding site" evidence="1">
    <location>
        <position position="156"/>
    </location>
    <ligand>
        <name>dCTP</name>
        <dbReference type="ChEBI" id="CHEBI:61481"/>
    </ligand>
</feature>
<feature type="binding site" evidence="1">
    <location>
        <position position="170"/>
    </location>
    <ligand>
        <name>dCTP</name>
        <dbReference type="ChEBI" id="CHEBI:61481"/>
    </ligand>
</feature>
<feature type="binding site" evidence="1">
    <location>
        <position position="180"/>
    </location>
    <ligand>
        <name>dCTP</name>
        <dbReference type="ChEBI" id="CHEBI:61481"/>
    </ligand>
</feature>
<sequence length="188" mass="21098">MSIKSDRWIRRMAEQHGMIEPFEPGQVRHAGEERIVSYGTSSYGYDVRCADEFKIFTNINSSIVDPKAFDARSFVDVKSDVCIIPPNSFALARTVEYFRIPRSVLTICLGKSTYARCGIIVNVTPLEPEWEGHVTLEFSNTTPLPAKIYANEGVAQMLFLESDEVCETSYKDRGGKYQGQVGVTLPKT</sequence>
<accession>B8GMA8</accession>
<gene>
    <name evidence="1" type="primary">dcd</name>
    <name type="ordered locus">Tgr7_2620</name>
</gene>
<name>DCD_THISH</name>
<dbReference type="EC" id="3.5.4.13" evidence="1"/>
<dbReference type="EMBL" id="CP001339">
    <property type="protein sequence ID" value="ACL73695.1"/>
    <property type="molecule type" value="Genomic_DNA"/>
</dbReference>
<dbReference type="RefSeq" id="WP_012639170.1">
    <property type="nucleotide sequence ID" value="NC_011901.1"/>
</dbReference>
<dbReference type="SMR" id="B8GMA8"/>
<dbReference type="STRING" id="396588.Tgr7_2620"/>
<dbReference type="KEGG" id="tgr:Tgr7_2620"/>
<dbReference type="eggNOG" id="COG0717">
    <property type="taxonomic scope" value="Bacteria"/>
</dbReference>
<dbReference type="HOGENOM" id="CLU_087476_4_0_6"/>
<dbReference type="OrthoDB" id="9780956at2"/>
<dbReference type="UniPathway" id="UPA00610">
    <property type="reaction ID" value="UER00665"/>
</dbReference>
<dbReference type="Proteomes" id="UP000002383">
    <property type="component" value="Chromosome"/>
</dbReference>
<dbReference type="GO" id="GO:0008829">
    <property type="term" value="F:dCTP deaminase activity"/>
    <property type="evidence" value="ECO:0007669"/>
    <property type="project" value="UniProtKB-UniRule"/>
</dbReference>
<dbReference type="GO" id="GO:0000166">
    <property type="term" value="F:nucleotide binding"/>
    <property type="evidence" value="ECO:0007669"/>
    <property type="project" value="UniProtKB-KW"/>
</dbReference>
<dbReference type="GO" id="GO:0006226">
    <property type="term" value="P:dUMP biosynthetic process"/>
    <property type="evidence" value="ECO:0007669"/>
    <property type="project" value="UniProtKB-UniPathway"/>
</dbReference>
<dbReference type="GO" id="GO:0006229">
    <property type="term" value="P:dUTP biosynthetic process"/>
    <property type="evidence" value="ECO:0007669"/>
    <property type="project" value="UniProtKB-UniRule"/>
</dbReference>
<dbReference type="GO" id="GO:0015949">
    <property type="term" value="P:nucleobase-containing small molecule interconversion"/>
    <property type="evidence" value="ECO:0007669"/>
    <property type="project" value="TreeGrafter"/>
</dbReference>
<dbReference type="CDD" id="cd07557">
    <property type="entry name" value="trimeric_dUTPase"/>
    <property type="match status" value="1"/>
</dbReference>
<dbReference type="FunFam" id="2.70.40.10:FF:000001">
    <property type="entry name" value="dCTP deaminase"/>
    <property type="match status" value="1"/>
</dbReference>
<dbReference type="Gene3D" id="2.70.40.10">
    <property type="match status" value="1"/>
</dbReference>
<dbReference type="HAMAP" id="MF_00146">
    <property type="entry name" value="dCTP_deaminase"/>
    <property type="match status" value="1"/>
</dbReference>
<dbReference type="InterPro" id="IPR011962">
    <property type="entry name" value="dCTP_deaminase"/>
</dbReference>
<dbReference type="InterPro" id="IPR036157">
    <property type="entry name" value="dUTPase-like_sf"/>
</dbReference>
<dbReference type="InterPro" id="IPR033704">
    <property type="entry name" value="dUTPase_trimeric"/>
</dbReference>
<dbReference type="NCBIfam" id="TIGR02274">
    <property type="entry name" value="dCTP_deam"/>
    <property type="match status" value="1"/>
</dbReference>
<dbReference type="PANTHER" id="PTHR42680">
    <property type="entry name" value="DCTP DEAMINASE"/>
    <property type="match status" value="1"/>
</dbReference>
<dbReference type="PANTHER" id="PTHR42680:SF3">
    <property type="entry name" value="DCTP DEAMINASE"/>
    <property type="match status" value="1"/>
</dbReference>
<dbReference type="Pfam" id="PF22769">
    <property type="entry name" value="DCD"/>
    <property type="match status" value="1"/>
</dbReference>
<dbReference type="SUPFAM" id="SSF51283">
    <property type="entry name" value="dUTPase-like"/>
    <property type="match status" value="1"/>
</dbReference>
<organism>
    <name type="scientific">Thioalkalivibrio sulfidiphilus (strain HL-EbGR7)</name>
    <dbReference type="NCBI Taxonomy" id="396588"/>
    <lineage>
        <taxon>Bacteria</taxon>
        <taxon>Pseudomonadati</taxon>
        <taxon>Pseudomonadota</taxon>
        <taxon>Gammaproteobacteria</taxon>
        <taxon>Chromatiales</taxon>
        <taxon>Ectothiorhodospiraceae</taxon>
        <taxon>Thioalkalivibrio</taxon>
    </lineage>
</organism>
<proteinExistence type="inferred from homology"/>
<protein>
    <recommendedName>
        <fullName evidence="1">dCTP deaminase</fullName>
        <ecNumber evidence="1">3.5.4.13</ecNumber>
    </recommendedName>
    <alternativeName>
        <fullName evidence="1">Deoxycytidine triphosphate deaminase</fullName>
    </alternativeName>
</protein>
<reference key="1">
    <citation type="journal article" date="2011" name="Stand. Genomic Sci.">
        <title>Complete genome sequence of 'Thioalkalivibrio sulfidophilus' HL-EbGr7.</title>
        <authorList>
            <person name="Muyzer G."/>
            <person name="Sorokin D.Y."/>
            <person name="Mavromatis K."/>
            <person name="Lapidus A."/>
            <person name="Clum A."/>
            <person name="Ivanova N."/>
            <person name="Pati A."/>
            <person name="d'Haeseleer P."/>
            <person name="Woyke T."/>
            <person name="Kyrpides N.C."/>
        </authorList>
    </citation>
    <scope>NUCLEOTIDE SEQUENCE [LARGE SCALE GENOMIC DNA]</scope>
    <source>
        <strain>HL-EbGR7</strain>
    </source>
</reference>
<comment type="function">
    <text evidence="1">Catalyzes the deamination of dCTP to dUTP.</text>
</comment>
<comment type="catalytic activity">
    <reaction evidence="1">
        <text>dCTP + H2O + H(+) = dUTP + NH4(+)</text>
        <dbReference type="Rhea" id="RHEA:22680"/>
        <dbReference type="ChEBI" id="CHEBI:15377"/>
        <dbReference type="ChEBI" id="CHEBI:15378"/>
        <dbReference type="ChEBI" id="CHEBI:28938"/>
        <dbReference type="ChEBI" id="CHEBI:61481"/>
        <dbReference type="ChEBI" id="CHEBI:61555"/>
        <dbReference type="EC" id="3.5.4.13"/>
    </reaction>
</comment>
<comment type="pathway">
    <text evidence="1">Pyrimidine metabolism; dUMP biosynthesis; dUMP from dCTP (dUTP route): step 1/2.</text>
</comment>
<comment type="subunit">
    <text evidence="1">Homotrimer.</text>
</comment>
<comment type="similarity">
    <text evidence="1">Belongs to the dCTP deaminase family.</text>
</comment>
<keyword id="KW-0378">Hydrolase</keyword>
<keyword id="KW-0546">Nucleotide metabolism</keyword>
<keyword id="KW-0547">Nucleotide-binding</keyword>
<keyword id="KW-1185">Reference proteome</keyword>